<proteinExistence type="evidence at protein level"/>
<feature type="chain" id="PRO_0000050086" description="Cold shock protein CSI5">
    <location>
        <begin position="1"/>
        <end position="11" status="greater than"/>
    </location>
</feature>
<feature type="non-terminal residue">
    <location>
        <position position="11"/>
    </location>
</feature>
<sequence>MRNIKVKPFLN</sequence>
<protein>
    <recommendedName>
        <fullName>Cold shock protein CSI5</fullName>
    </recommendedName>
    <alternativeName>
        <fullName>11 kDa cold shock protein</fullName>
    </alternativeName>
</protein>
<dbReference type="GO" id="GO:0005737">
    <property type="term" value="C:cytoplasm"/>
    <property type="evidence" value="ECO:0007669"/>
    <property type="project" value="UniProtKB-SubCell"/>
</dbReference>
<keyword id="KW-0963">Cytoplasm</keyword>
<keyword id="KW-0903">Direct protein sequencing</keyword>
<keyword id="KW-0346">Stress response</keyword>
<organism>
    <name type="scientific">Bacillus subtilis</name>
    <dbReference type="NCBI Taxonomy" id="1423"/>
    <lineage>
        <taxon>Bacteria</taxon>
        <taxon>Bacillati</taxon>
        <taxon>Bacillota</taxon>
        <taxon>Bacilli</taxon>
        <taxon>Bacillales</taxon>
        <taxon>Bacillaceae</taxon>
        <taxon>Bacillus</taxon>
    </lineage>
</organism>
<reference key="1">
    <citation type="submission" date="1997-10" db="UniProtKB">
        <authorList>
            <person name="Graumann P.L."/>
            <person name="Schmid R."/>
            <person name="Marahiel M.A."/>
        </authorList>
    </citation>
    <scope>PROTEIN SEQUENCE</scope>
    <source>
        <strain>168 / JH642</strain>
    </source>
</reference>
<reference key="2">
    <citation type="journal article" date="1996" name="J. Bacteriol.">
        <title>Cold shock stress-induced proteins in Bacillus subtilis.</title>
        <authorList>
            <person name="Graumann P."/>
            <person name="Schroeder K."/>
            <person name="Schmid R."/>
            <person name="Marahiel M.A."/>
        </authorList>
    </citation>
    <scope>CHARACTERIZATION</scope>
    <source>
        <strain>168 / JH642</strain>
    </source>
</reference>
<name>CSI5_BACIU</name>
<comment type="subcellular location">
    <subcellularLocation>
        <location>Cytoplasm</location>
    </subcellularLocation>
</comment>
<comment type="induction">
    <text>In response to low temperature.</text>
</comment>
<accession>P81095</accession>